<gene>
    <name type="ORF">IIV6-443R</name>
</gene>
<accession>P18305</accession>
<accession>P18306</accession>
<accession>P18307</accession>
<accession>P18308</accession>
<accession>P18309</accession>
<accession>Q8QZQ6</accession>
<sequence length="2432" mass="237373">MSFNLNNALDDKITVVRGIPGDIVIFGIDGTIADSGVPVSIGSGQAKQPTAVPGDLAVFGSGVNQGQTIDSGLTVDDSSVSLPTVLWSSQKIESLIPTGSFLPLAGGTMTGTIISKDIVVPSGNVITLTDLPTVGTSAANKTYVDSKVSPGGPFLPLTGGTMSGDIVIQTGDIISIADLPITANSAANKAYVDSQISSGVPNATPTVLGKIQLAGDFDVTSTATVPVIKSATTSLEGKIQLAGDFDSSSTASIPIIKSATTLIEGKIQLAGDLTGTATSPLVAPGSITISKMAPLSASSKLIGSSSSTTVAEIGVGGSLEISSGILQENIPSLSNIFLPLSGGTMAGNIIVPTGDYITITDPPTVGTGAANKAYVDANITPNATPTVLGKIQLSGDISGTAIAPVVSPGAITLSKMANLNAVSNLIGSSNTNVTPTNISLGSNLQMTGTTLNVNLTSLSGSFLSLLGGTMSGNIIIPSGDLISIADAPVSGTSAANKSYVDSQIIVNATPNATSTVLGKIQLTGDLLGSSATFPTVAPGAITLSKLANLSSPSKLIGSGSTSSSPANITLGTSLSMSGTSLNVVPTFSNPTFNGTISGTAVLGVSNGGTGNSTLTGYVVGNGTAPFTAVTSIPVSNVNGAVQSVNGVFPDLSGNVTVTLGTVTTGTLAALPPVGPPLVNGDIYVVSGDPTPSNNGLTFIYSTTPTNQWLEISPSFGSLDARYLQLSGGTMSGNIVIPSGNFITLTSLPVNPTDAANKSYVDVNITPSATTSLQGKVQLSGDLSGVASAPVITTGAITLTKMANLTSTSSLIGSSSTSTSPSQLSLGSNLQISGTTLDVNTSSLSGTFLPLTGGTMSGNIVIPTGDLISITDAPTIGTSAANKAYVDANITPNATSTVLGKIQLAGDLLGSSATLPTISAGAVTLSKMANLSTTMSLIGSSSTSNLVSQLSLGSNLQISGTTLDVNTSSLSGTFLPLAGGTMSGNIVIPTGDLISIADAPTVGTSAANKAYVDANITPNATTTVLGKIQLSGDFDSTSTATVPVIKSATSSIQGKIQLSGDLTGSSTSPTIAAGAITLVKMANLSGNSQIIGSSSTASTPTNLTLGSGLQISGTVLSVNSATLTVPPATATTIGGIEMLGDLTGSVATAPTVATGAITLAKMANLSGNSQIIGSSSTTSTPTNLTLGSGLQISGTVLSVNSATLTVPPATSTSLGGIEMLGDLTGSVATAPTVAAGAITLAKMANLSGNSQIIGSSSTASTPVNLTLGNFLQMTGTVLNVNSSSLSGTFLPLSGGTMSGNIVIPTGDLISIADAPTVGTSAANKAYVDAQIISATPNATTTTLGKIQLSGDFDSTSTATVPIIKSATSSIQGKIQLSGDLTGSSISPTVAAGAITLAKMANLSGNSQIIGSSSTTSSPTNLTLGSGLQISGTVLSVNSATLTVPPATATTIGGIEMLGDLTGSVATAPTVAAGAITLAKMANLSGSSQIIGSSSTTSAPTNLTLGSGLQITSTVLSISAATSSTLGGIEMLGDLTGSVATAPTVAAGAITLAKMANLSGNSQIIGSSSTASTPTNLTLGSGLQISGTVLSVNSATLTVPPATATTIGGIEMLGDLTGSVATAPTVAAGAITLAKMANLSGNSQIIGSSSTASTPTNLTLGSGLQISGTVLSVNSATLTVPPATATTIGGIEMLGDLTGSVATAPTVAAGAITLAKMANLSGNSQIIGSSSTASTPTNLTLGSGLQISGTVLSINSATLTVPPATATTIGGIEMLGDLTGSVATAPTVAAGAITLAKMANLSGNSQIIGSSSTASTPTNLTLGSGLQISGTILNVNTTSLSSTFLPLAGGTMSGNIIIPTGDLISIADAPLVGTSGANKSYVDSQIIANATPSATTGIQGKIQLAGDLGGSGTTASSPVISSGAITLTKMANLSGNSQIIGSGSTSSSPVNLTLGSGLQISGTVLSVNSATLTVPPATATTIGGIEMLGDLTGSVATAPTIAAGAITLAKMANLSGNSQIIGSSSTTSTPTNLTLGSGLQISGTVLSVNSATLTVPPATATTIGGIEMLGDLTGSVATAPTVATGAITLSKMANLSGNSQIIGSSSTTSTPTNLTLGSGLQISGTVLSVNSATLTVPPATATTIGGIEMLGDLTGSVATAPTVAAGAITLAKMANLSGTSQLIGSSSTTTSPANISLGSTLQMSGTTLSVNTSTLMLLVPSSVNGDLATLNASGQVIDSGVSINNSGLTSASLWNAAKLAITTNSWFAGTNPNTTAPTDRPATSSVLYVGTDASLWIWNGSVYISLIGAKVPTSVTRTFTTSTGASGFQISTINGAFVHYSVSISTTIGVGGTSTGTVNLEVSPTNSATPASWIVNGVISNSQSFAGLITLSSVQVQGGQLCTYVPAGYFVKLRTTSSGTTSFSYVAGIEVLDN</sequence>
<reference key="1">
    <citation type="journal article" date="1988" name="Virology">
        <title>DNA nucleotide sequence analysis of the PvuII DNA fragment L of the genome of insect iridescent virus type 6 reveals a complex cluster of multiple tandem, overlapping, and interdigitated repetitive DNA elements.</title>
        <authorList>
            <person name="Fischer M."/>
            <person name="Schnitzler P."/>
            <person name="Scholz J."/>
            <person name="Roesen-Wolff A."/>
            <person name="Delius H."/>
            <person name="Darai G."/>
        </authorList>
    </citation>
    <scope>NUCLEOTIDE SEQUENCE [GENOMIC DNA]</scope>
</reference>
<reference key="2">
    <citation type="journal article" date="2001" name="Virology">
        <title>Analysis of the first complete DNA sequence of an invertebrate iridovirus: coding strategy of the genome of Chilo iridescent virus.</title>
        <authorList>
            <person name="Jakob N.J."/>
            <person name="Mueller K."/>
            <person name="Bahr U."/>
            <person name="Darai G."/>
        </authorList>
    </citation>
    <scope>NUCLEOTIDE SEQUENCE [LARGE SCALE GENOMIC DNA]</scope>
</reference>
<reference key="3">
    <citation type="journal article" date="2007" name="Virol. J.">
        <title>Comparative genomic analysis of the family Iridoviridae: re-annotating and defining the core set of iridovirus genes.</title>
        <authorList>
            <person name="Eaton H.E."/>
            <person name="Metcalf J."/>
            <person name="Penny E."/>
            <person name="Tcherepanov V."/>
            <person name="Upton C."/>
            <person name="Brunetti C.R."/>
        </authorList>
    </citation>
    <scope>GENOME REANNOTATION</scope>
</reference>
<keyword id="KW-1185">Reference proteome</keyword>
<proteinExistence type="inferred from homology"/>
<dbReference type="EMBL" id="AF303741">
    <property type="protein sequence ID" value="AAK82303.1"/>
    <property type="molecule type" value="Genomic_DNA"/>
</dbReference>
<dbReference type="PIR" id="A31828">
    <property type="entry name" value="RPXFII"/>
</dbReference>
<dbReference type="PIR" id="B31828">
    <property type="entry name" value="RPXFIJ"/>
</dbReference>
<dbReference type="PIR" id="C31828">
    <property type="entry name" value="RPXFIK"/>
</dbReference>
<dbReference type="PIR" id="D31828">
    <property type="entry name" value="RPXFIL"/>
</dbReference>
<dbReference type="PIR" id="E31828">
    <property type="entry name" value="RPXFIM"/>
</dbReference>
<dbReference type="RefSeq" id="NP_149906.1">
    <property type="nucleotide sequence ID" value="NC_003038.1"/>
</dbReference>
<dbReference type="KEGG" id="vg:1733082"/>
<dbReference type="Proteomes" id="UP000001359">
    <property type="component" value="Genome"/>
</dbReference>
<dbReference type="InterPro" id="IPR045571">
    <property type="entry name" value="DUF5907"/>
</dbReference>
<dbReference type="Pfam" id="PF19264">
    <property type="entry name" value="DUF5907"/>
    <property type="match status" value="22"/>
</dbReference>
<comment type="similarity">
    <text evidence="1">Belongs to the IIV-6 261R/396L/443R family.</text>
</comment>
<protein>
    <recommendedName>
        <fullName>Uncharacterized protein 443R</fullName>
    </recommendedName>
</protein>
<organism>
    <name type="scientific">Invertebrate iridescent virus 6</name>
    <name type="common">IIV-6</name>
    <name type="synonym">Chilo iridescent virus</name>
    <dbReference type="NCBI Taxonomy" id="176652"/>
    <lineage>
        <taxon>Viruses</taxon>
        <taxon>Varidnaviria</taxon>
        <taxon>Bamfordvirae</taxon>
        <taxon>Nucleocytoviricota</taxon>
        <taxon>Megaviricetes</taxon>
        <taxon>Pimascovirales</taxon>
        <taxon>Iridoviridae</taxon>
        <taxon>Betairidovirinae</taxon>
        <taxon>Iridovirus</taxon>
    </lineage>
</organism>
<feature type="chain" id="PRO_0000222390" description="Uncharacterized protein 443R">
    <location>
        <begin position="1"/>
        <end position="2432"/>
    </location>
</feature>
<organismHost>
    <name type="scientific">Acheta domesticus</name>
    <name type="common">House cricket</name>
    <dbReference type="NCBI Taxonomy" id="6997"/>
</organismHost>
<organismHost>
    <name type="scientific">Chilo suppressalis</name>
    <name type="common">Asiatic rice borer moth</name>
    <dbReference type="NCBI Taxonomy" id="168631"/>
</organismHost>
<organismHost>
    <name type="scientific">Gryllus bimaculatus</name>
    <name type="common">Two-spotted cricket</name>
    <dbReference type="NCBI Taxonomy" id="6999"/>
</organismHost>
<organismHost>
    <name type="scientific">Gryllus campestris</name>
    <dbReference type="NCBI Taxonomy" id="58607"/>
</organismHost>
<organismHost>
    <name type="scientific">Spodoptera frugiperda</name>
    <name type="common">Fall armyworm</name>
    <dbReference type="NCBI Taxonomy" id="7108"/>
</organismHost>
<name>443R_IIV6</name>
<evidence type="ECO:0000305" key="1"/>